<feature type="chain" id="PRO_0000121072" description="Ras-related protein Rab-2B">
    <location>
        <begin position="1"/>
        <end position="216"/>
    </location>
</feature>
<feature type="region of interest" description="Disordered" evidence="4">
    <location>
        <begin position="189"/>
        <end position="216"/>
    </location>
</feature>
<feature type="short sequence motif" description="Switch 1" evidence="2">
    <location>
        <begin position="37"/>
        <end position="42"/>
    </location>
</feature>
<feature type="short sequence motif" description="Switch 2" evidence="2">
    <location>
        <begin position="63"/>
        <end position="72"/>
    </location>
</feature>
<feature type="compositionally biased region" description="Polar residues" evidence="4">
    <location>
        <begin position="189"/>
        <end position="207"/>
    </location>
</feature>
<feature type="binding site" evidence="2">
    <location>
        <position position="16"/>
    </location>
    <ligand>
        <name>GTP</name>
        <dbReference type="ChEBI" id="CHEBI:37565"/>
    </ligand>
</feature>
<feature type="binding site" evidence="2">
    <location>
        <position position="17"/>
    </location>
    <ligand>
        <name>GTP</name>
        <dbReference type="ChEBI" id="CHEBI:37565"/>
    </ligand>
</feature>
<feature type="binding site" evidence="2">
    <location>
        <position position="18"/>
    </location>
    <ligand>
        <name>GTP</name>
        <dbReference type="ChEBI" id="CHEBI:37565"/>
    </ligand>
</feature>
<feature type="binding site" evidence="2">
    <location>
        <position position="19"/>
    </location>
    <ligand>
        <name>GTP</name>
        <dbReference type="ChEBI" id="CHEBI:37565"/>
    </ligand>
</feature>
<feature type="binding site" evidence="2">
    <location>
        <position position="20"/>
    </location>
    <ligand>
        <name>GTP</name>
        <dbReference type="ChEBI" id="CHEBI:37565"/>
    </ligand>
</feature>
<feature type="binding site" evidence="3">
    <location>
        <position position="20"/>
    </location>
    <ligand>
        <name>Mg(2+)</name>
        <dbReference type="ChEBI" id="CHEBI:18420"/>
    </ligand>
</feature>
<feature type="binding site" evidence="2">
    <location>
        <position position="21"/>
    </location>
    <ligand>
        <name>GTP</name>
        <dbReference type="ChEBI" id="CHEBI:37565"/>
    </ligand>
</feature>
<feature type="binding site" evidence="2">
    <location>
        <position position="38"/>
    </location>
    <ligand>
        <name>GTP</name>
        <dbReference type="ChEBI" id="CHEBI:37565"/>
    </ligand>
</feature>
<feature type="binding site" evidence="2">
    <location>
        <position position="38"/>
    </location>
    <ligand>
        <name>Mg(2+)</name>
        <dbReference type="ChEBI" id="CHEBI:18420"/>
    </ligand>
</feature>
<feature type="binding site" evidence="2">
    <location>
        <position position="61"/>
    </location>
    <ligand>
        <name>Mg(2+)</name>
        <dbReference type="ChEBI" id="CHEBI:18420"/>
    </ligand>
</feature>
<feature type="binding site" evidence="2">
    <location>
        <position position="64"/>
    </location>
    <ligand>
        <name>GTP</name>
        <dbReference type="ChEBI" id="CHEBI:37565"/>
    </ligand>
</feature>
<feature type="binding site" evidence="2">
    <location>
        <position position="119"/>
    </location>
    <ligand>
        <name>GTP</name>
        <dbReference type="ChEBI" id="CHEBI:37565"/>
    </ligand>
</feature>
<feature type="binding site" evidence="2">
    <location>
        <position position="120"/>
    </location>
    <ligand>
        <name>GTP</name>
        <dbReference type="ChEBI" id="CHEBI:37565"/>
    </ligand>
</feature>
<feature type="binding site" evidence="2">
    <location>
        <position position="122"/>
    </location>
    <ligand>
        <name>GTP</name>
        <dbReference type="ChEBI" id="CHEBI:37565"/>
    </ligand>
</feature>
<feature type="binding site" evidence="2">
    <location>
        <position position="150"/>
    </location>
    <ligand>
        <name>GTP</name>
        <dbReference type="ChEBI" id="CHEBI:37565"/>
    </ligand>
</feature>
<feature type="binding site" evidence="2">
    <location>
        <position position="151"/>
    </location>
    <ligand>
        <name>GTP</name>
        <dbReference type="ChEBI" id="CHEBI:37565"/>
    </ligand>
</feature>
<feature type="lipid moiety-binding region" description="S-geranylgeranyl cysteine" evidence="1">
    <location>
        <position position="215"/>
    </location>
</feature>
<feature type="lipid moiety-binding region" description="S-geranylgeranyl cysteine" evidence="1">
    <location>
        <position position="216"/>
    </location>
</feature>
<feature type="mutagenesis site" description="Constitutively inactive. Loss of Golgi apparatus location. Loss of interaction with GARIN1B." evidence="6 7">
    <original>S</original>
    <variation>N</variation>
    <location>
        <position position="20"/>
    </location>
</feature>
<feature type="mutagenesis site" description="Constitutively active. Interacts with GARIN1B." evidence="6 7">
    <original>Q</original>
    <variation>L</variation>
    <location>
        <position position="65"/>
    </location>
</feature>
<evidence type="ECO:0000250" key="1"/>
<evidence type="ECO:0000250" key="2">
    <source>
        <dbReference type="UniProtKB" id="P61106"/>
    </source>
</evidence>
<evidence type="ECO:0000250" key="3">
    <source>
        <dbReference type="UniProtKB" id="Q8WUD1"/>
    </source>
</evidence>
<evidence type="ECO:0000256" key="4">
    <source>
        <dbReference type="SAM" id="MobiDB-lite"/>
    </source>
</evidence>
<evidence type="ECO:0000269" key="5">
    <source>
    </source>
</evidence>
<evidence type="ECO:0000269" key="6">
    <source>
    </source>
</evidence>
<evidence type="ECO:0000269" key="7">
    <source>
    </source>
</evidence>
<evidence type="ECO:0000305" key="8"/>
<evidence type="ECO:0000305" key="9">
    <source>
    </source>
</evidence>
<keyword id="KW-1003">Cell membrane</keyword>
<keyword id="KW-0968">Cytoplasmic vesicle</keyword>
<keyword id="KW-0256">Endoplasmic reticulum</keyword>
<keyword id="KW-0931">ER-Golgi transport</keyword>
<keyword id="KW-0333">Golgi apparatus</keyword>
<keyword id="KW-0342">GTP-binding</keyword>
<keyword id="KW-0378">Hydrolase</keyword>
<keyword id="KW-0449">Lipoprotein</keyword>
<keyword id="KW-0460">Magnesium</keyword>
<keyword id="KW-0472">Membrane</keyword>
<keyword id="KW-0479">Metal-binding</keyword>
<keyword id="KW-0547">Nucleotide-binding</keyword>
<keyword id="KW-0636">Prenylation</keyword>
<keyword id="KW-0653">Protein transport</keyword>
<keyword id="KW-1185">Reference proteome</keyword>
<keyword id="KW-0813">Transport</keyword>
<proteinExistence type="evidence at protein level"/>
<sequence length="216" mass="24198">MTYAYLFKYIIIGDTGVGKSCLLLQFTDKRFQPVHDLTIGVEFGARMVNIDGKQIKLQIWDTAGQESFRSITRSYYRGAAGALLVYDITRRETFNHLTSWLEDARQHSSSNMVIMLIGNKSDLESRRDVKREEGEAFAREHGLIFMETSAKTACNVEEAYINTAKEIYRKIQQGLFDVHNEANGIKIGPQQSITSSVGPCSPQQNVSDIGPDSGCC</sequence>
<organism>
    <name type="scientific">Mus musculus</name>
    <name type="common">Mouse</name>
    <dbReference type="NCBI Taxonomy" id="10090"/>
    <lineage>
        <taxon>Eukaryota</taxon>
        <taxon>Metazoa</taxon>
        <taxon>Chordata</taxon>
        <taxon>Craniata</taxon>
        <taxon>Vertebrata</taxon>
        <taxon>Euteleostomi</taxon>
        <taxon>Mammalia</taxon>
        <taxon>Eutheria</taxon>
        <taxon>Euarchontoglires</taxon>
        <taxon>Glires</taxon>
        <taxon>Rodentia</taxon>
        <taxon>Myomorpha</taxon>
        <taxon>Muroidea</taxon>
        <taxon>Muridae</taxon>
        <taxon>Murinae</taxon>
        <taxon>Mus</taxon>
        <taxon>Mus</taxon>
    </lineage>
</organism>
<name>RAB2B_MOUSE</name>
<accession>P59279</accession>
<accession>Q3TV67</accession>
<gene>
    <name type="primary">Rab2b</name>
</gene>
<protein>
    <recommendedName>
        <fullName>Ras-related protein Rab-2B</fullName>
        <ecNumber evidence="3">3.6.5.2</ecNumber>
    </recommendedName>
</protein>
<comment type="function">
    <text evidence="3 5 6">The small GTPases Rab are key regulators of intracellular membrane trafficking, from the formation of transport vesicles to their fusion with membranes. Rabs cycle between active GTP-bound and inactive GDP-bound states (PubMed:28930687). In their active state, drive transport of vesicular carriers from donor organelles to acceptor organelles to regulate the membrane traffic that maintains organelle identity and morphology (PubMed:28930687). Regulates the compacted morphology of the Golgi (By similarity). Promotes cytosolic DNA-induced innate immune responses. Regulates IFN responses against DNA viruses by regulating the CGAS-STING signaling axis (PubMed:28930687). Together with RAB2A redundantly required for efficient autophagic flux (PubMed:28063257).</text>
</comment>
<comment type="catalytic activity">
    <reaction evidence="9">
        <text>GTP + H2O = GDP + phosphate + H(+)</text>
        <dbReference type="Rhea" id="RHEA:19669"/>
        <dbReference type="ChEBI" id="CHEBI:15377"/>
        <dbReference type="ChEBI" id="CHEBI:15378"/>
        <dbReference type="ChEBI" id="CHEBI:37565"/>
        <dbReference type="ChEBI" id="CHEBI:43474"/>
        <dbReference type="ChEBI" id="CHEBI:58189"/>
        <dbReference type="EC" id="3.6.5.2"/>
    </reaction>
    <physiologicalReaction direction="left-to-right" evidence="9">
        <dbReference type="Rhea" id="RHEA:19670"/>
    </physiologicalReaction>
</comment>
<comment type="cofactor">
    <cofactor evidence="3">
        <name>Mg(2+)</name>
        <dbReference type="ChEBI" id="CHEBI:18420"/>
    </cofactor>
</comment>
<comment type="activity regulation">
    <text evidence="8">Regulated by guanine nucleotide exchange factors (GEFs) which promote the exchange of bound GDP for free GTP, GTPase activating proteins (GAPs) which increase the GTP hydrolysis activity, and GDP dissociation inhibitors (GDIs) which inhibit the dissociation of the nucleotide from the GTPase.</text>
</comment>
<comment type="subunit">
    <text evidence="3 5 6 7">Interacts (in GTP-bound form) with GARIN4 (via N-terminus) (By similarity). Interacts (in GTP-bound form) with GARIN5A (PubMed:28930687). Interacts (in GTP-bound form) with GARIN1B (PubMed:34714330). Interacts with VPS39 and VPS41 (PubMed:28063257).</text>
</comment>
<comment type="subcellular location">
    <subcellularLocation>
        <location evidence="8">Cell membrane</location>
        <topology evidence="8">Lipid-anchor</topology>
        <orientation evidence="8">Cytoplasmic side</orientation>
    </subcellularLocation>
    <subcellularLocation>
        <location evidence="8">Endoplasmic reticulum membrane</location>
        <topology evidence="8">Lipid-anchor</topology>
    </subcellularLocation>
    <subcellularLocation>
        <location evidence="6 7">Golgi apparatus membrane</location>
        <topology evidence="8">Lipid-anchor</topology>
    </subcellularLocation>
    <subcellularLocation>
        <location evidence="7">Cytoplasmic vesicle</location>
        <location evidence="7">Secretory vesicle</location>
        <location evidence="7">Acrosome</location>
    </subcellularLocation>
    <subcellularLocation>
        <location evidence="5">Cytoplasmic vesicle</location>
        <location evidence="5">Autophagosome membrane</location>
        <topology evidence="8">Lipid-anchor</topology>
        <orientation evidence="8">Cytoplasmic side</orientation>
    </subcellularLocation>
    <text evidence="7">Localized in the Golgi apparatus in the round spermatids and in the acrosome in the elongating spermatid.</text>
</comment>
<comment type="domain">
    <text evidence="2">Switch 1, switch 2 and the interswitch regions are characteristic of Rab GTPases and mediate the interactions with Rab downstream effectors. The switch regions undergo conformational changes upon nucleotide binding which drives interaction with specific sets of effector proteins, with most effectors only binding to GTP-bound Rab.</text>
</comment>
<comment type="similarity">
    <text evidence="8">Belongs to the small GTPase superfamily. Rab family.</text>
</comment>
<dbReference type="EC" id="3.6.5.2" evidence="3"/>
<dbReference type="EMBL" id="AK038393">
    <property type="protein sequence ID" value="BAC29983.1"/>
    <property type="molecule type" value="mRNA"/>
</dbReference>
<dbReference type="EMBL" id="AK044202">
    <property type="protein sequence ID" value="BAC31814.1"/>
    <property type="molecule type" value="mRNA"/>
</dbReference>
<dbReference type="EMBL" id="AK160249">
    <property type="protein sequence ID" value="BAE35713.1"/>
    <property type="molecule type" value="mRNA"/>
</dbReference>
<dbReference type="EMBL" id="AK160351">
    <property type="protein sequence ID" value="BAE35753.1"/>
    <property type="molecule type" value="mRNA"/>
</dbReference>
<dbReference type="EMBL" id="BC046334">
    <property type="protein sequence ID" value="AAH46334.1"/>
    <property type="molecule type" value="mRNA"/>
</dbReference>
<dbReference type="CCDS" id="CCDS27052.1"/>
<dbReference type="RefSeq" id="NP_766189.1">
    <property type="nucleotide sequence ID" value="NM_172601.3"/>
</dbReference>
<dbReference type="SMR" id="P59279"/>
<dbReference type="BioGRID" id="218074">
    <property type="interactions" value="3"/>
</dbReference>
<dbReference type="FunCoup" id="P59279">
    <property type="interactions" value="2047"/>
</dbReference>
<dbReference type="IntAct" id="P59279">
    <property type="interactions" value="6"/>
</dbReference>
<dbReference type="STRING" id="10090.ENSMUSP00000022765"/>
<dbReference type="GlyGen" id="P59279">
    <property type="glycosylation" value="1 site, 1 N-linked glycan (1 site)"/>
</dbReference>
<dbReference type="iPTMnet" id="P59279"/>
<dbReference type="PhosphoSitePlus" id="P59279"/>
<dbReference type="SwissPalm" id="P59279"/>
<dbReference type="jPOST" id="P59279"/>
<dbReference type="PaxDb" id="10090-ENSMUSP00000022765"/>
<dbReference type="PeptideAtlas" id="P59279"/>
<dbReference type="ProteomicsDB" id="300375"/>
<dbReference type="Pumba" id="P59279"/>
<dbReference type="Antibodypedia" id="22150">
    <property type="antibodies" value="209 antibodies from 31 providers"/>
</dbReference>
<dbReference type="DNASU" id="76338"/>
<dbReference type="Ensembl" id="ENSMUST00000022765.14">
    <property type="protein sequence ID" value="ENSMUSP00000022765.8"/>
    <property type="gene ID" value="ENSMUSG00000022159.17"/>
</dbReference>
<dbReference type="Ensembl" id="ENSMUST00000167116.8">
    <property type="protein sequence ID" value="ENSMUSP00000131145.2"/>
    <property type="gene ID" value="ENSMUSG00000022159.17"/>
</dbReference>
<dbReference type="GeneID" id="76338"/>
<dbReference type="KEGG" id="mmu:76338"/>
<dbReference type="UCSC" id="uc007tox.2">
    <property type="organism name" value="mouse"/>
</dbReference>
<dbReference type="AGR" id="MGI:1923588"/>
<dbReference type="CTD" id="84932"/>
<dbReference type="MGI" id="MGI:1923588">
    <property type="gene designation" value="Rab2b"/>
</dbReference>
<dbReference type="VEuPathDB" id="HostDB:ENSMUSG00000022159"/>
<dbReference type="eggNOG" id="KOG0098">
    <property type="taxonomic scope" value="Eukaryota"/>
</dbReference>
<dbReference type="GeneTree" id="ENSGT00940000153886"/>
<dbReference type="InParanoid" id="P59279"/>
<dbReference type="OMA" id="FNHLTCW"/>
<dbReference type="OrthoDB" id="9989112at2759"/>
<dbReference type="PhylomeDB" id="P59279"/>
<dbReference type="TreeFam" id="TF300032"/>
<dbReference type="Reactome" id="R-MMU-8873719">
    <property type="pathway name" value="RAB geranylgeranylation"/>
</dbReference>
<dbReference type="BioGRID-ORCS" id="76338">
    <property type="hits" value="4 hits in 76 CRISPR screens"/>
</dbReference>
<dbReference type="ChiTaRS" id="Rab2b">
    <property type="organism name" value="mouse"/>
</dbReference>
<dbReference type="PRO" id="PR:P59279"/>
<dbReference type="Proteomes" id="UP000000589">
    <property type="component" value="Chromosome 14"/>
</dbReference>
<dbReference type="RNAct" id="P59279">
    <property type="molecule type" value="protein"/>
</dbReference>
<dbReference type="Bgee" id="ENSMUSG00000022159">
    <property type="expression patterns" value="Expressed in bone fossa and 242 other cell types or tissues"/>
</dbReference>
<dbReference type="ExpressionAtlas" id="P59279">
    <property type="expression patterns" value="baseline and differential"/>
</dbReference>
<dbReference type="GO" id="GO:0001669">
    <property type="term" value="C:acrosomal vesicle"/>
    <property type="evidence" value="ECO:0000314"/>
    <property type="project" value="UniProtKB"/>
</dbReference>
<dbReference type="GO" id="GO:0000421">
    <property type="term" value="C:autophagosome membrane"/>
    <property type="evidence" value="ECO:0000314"/>
    <property type="project" value="UniProtKB"/>
</dbReference>
<dbReference type="GO" id="GO:0005789">
    <property type="term" value="C:endoplasmic reticulum membrane"/>
    <property type="evidence" value="ECO:0007669"/>
    <property type="project" value="UniProtKB-SubCell"/>
</dbReference>
<dbReference type="GO" id="GO:0005794">
    <property type="term" value="C:Golgi apparatus"/>
    <property type="evidence" value="ECO:0000314"/>
    <property type="project" value="UniProtKB"/>
</dbReference>
<dbReference type="GO" id="GO:0000139">
    <property type="term" value="C:Golgi membrane"/>
    <property type="evidence" value="ECO:0007669"/>
    <property type="project" value="UniProtKB-SubCell"/>
</dbReference>
<dbReference type="GO" id="GO:0005886">
    <property type="term" value="C:plasma membrane"/>
    <property type="evidence" value="ECO:0007669"/>
    <property type="project" value="UniProtKB-SubCell"/>
</dbReference>
<dbReference type="GO" id="GO:0005525">
    <property type="term" value="F:GTP binding"/>
    <property type="evidence" value="ECO:0007669"/>
    <property type="project" value="UniProtKB-KW"/>
</dbReference>
<dbReference type="GO" id="GO:0003924">
    <property type="term" value="F:GTPase activity"/>
    <property type="evidence" value="ECO:0007669"/>
    <property type="project" value="InterPro"/>
</dbReference>
<dbReference type="GO" id="GO:0051607">
    <property type="term" value="P:defense response to virus"/>
    <property type="evidence" value="ECO:0000314"/>
    <property type="project" value="UniProtKB"/>
</dbReference>
<dbReference type="GO" id="GO:0007030">
    <property type="term" value="P:Golgi organization"/>
    <property type="evidence" value="ECO:0000250"/>
    <property type="project" value="UniProtKB"/>
</dbReference>
<dbReference type="GO" id="GO:0045087">
    <property type="term" value="P:innate immune response"/>
    <property type="evidence" value="ECO:0000314"/>
    <property type="project" value="UniProtKB"/>
</dbReference>
<dbReference type="GO" id="GO:0016236">
    <property type="term" value="P:macroautophagy"/>
    <property type="evidence" value="ECO:0000315"/>
    <property type="project" value="UniProtKB"/>
</dbReference>
<dbReference type="GO" id="GO:0045921">
    <property type="term" value="P:positive regulation of exocytosis"/>
    <property type="evidence" value="ECO:0007669"/>
    <property type="project" value="Ensembl"/>
</dbReference>
<dbReference type="GO" id="GO:0032481">
    <property type="term" value="P:positive regulation of type I interferon production"/>
    <property type="evidence" value="ECO:0000314"/>
    <property type="project" value="UniProtKB"/>
</dbReference>
<dbReference type="GO" id="GO:0015031">
    <property type="term" value="P:protein transport"/>
    <property type="evidence" value="ECO:0007669"/>
    <property type="project" value="UniProtKB-KW"/>
</dbReference>
<dbReference type="GO" id="GO:0016192">
    <property type="term" value="P:vesicle-mediated transport"/>
    <property type="evidence" value="ECO:0007669"/>
    <property type="project" value="UniProtKB-KW"/>
</dbReference>
<dbReference type="CDD" id="cd01866">
    <property type="entry name" value="Rab2"/>
    <property type="match status" value="1"/>
</dbReference>
<dbReference type="FunFam" id="3.40.50.300:FF:000275">
    <property type="entry name" value="Putative ras-related protein Rab-2A"/>
    <property type="match status" value="1"/>
</dbReference>
<dbReference type="Gene3D" id="3.40.50.300">
    <property type="entry name" value="P-loop containing nucleotide triphosphate hydrolases"/>
    <property type="match status" value="1"/>
</dbReference>
<dbReference type="InterPro" id="IPR027417">
    <property type="entry name" value="P-loop_NTPase"/>
</dbReference>
<dbReference type="InterPro" id="IPR050209">
    <property type="entry name" value="Rab_GTPases_membrane_traffic"/>
</dbReference>
<dbReference type="InterPro" id="IPR005225">
    <property type="entry name" value="Small_GTP-bd"/>
</dbReference>
<dbReference type="InterPro" id="IPR001806">
    <property type="entry name" value="Small_GTPase"/>
</dbReference>
<dbReference type="NCBIfam" id="TIGR00231">
    <property type="entry name" value="small_GTP"/>
    <property type="match status" value="1"/>
</dbReference>
<dbReference type="PANTHER" id="PTHR47979">
    <property type="entry name" value="DRAB11-RELATED"/>
    <property type="match status" value="1"/>
</dbReference>
<dbReference type="Pfam" id="PF00071">
    <property type="entry name" value="Ras"/>
    <property type="match status" value="1"/>
</dbReference>
<dbReference type="PRINTS" id="PR00449">
    <property type="entry name" value="RASTRNSFRMNG"/>
</dbReference>
<dbReference type="SMART" id="SM00175">
    <property type="entry name" value="RAB"/>
    <property type="match status" value="1"/>
</dbReference>
<dbReference type="SMART" id="SM00176">
    <property type="entry name" value="RAN"/>
    <property type="match status" value="1"/>
</dbReference>
<dbReference type="SMART" id="SM00173">
    <property type="entry name" value="RAS"/>
    <property type="match status" value="1"/>
</dbReference>
<dbReference type="SMART" id="SM00174">
    <property type="entry name" value="RHO"/>
    <property type="match status" value="1"/>
</dbReference>
<dbReference type="SUPFAM" id="SSF52540">
    <property type="entry name" value="P-loop containing nucleoside triphosphate hydrolases"/>
    <property type="match status" value="1"/>
</dbReference>
<dbReference type="PROSITE" id="PS51419">
    <property type="entry name" value="RAB"/>
    <property type="match status" value="1"/>
</dbReference>
<reference key="1">
    <citation type="journal article" date="2005" name="Science">
        <title>The transcriptional landscape of the mammalian genome.</title>
        <authorList>
            <person name="Carninci P."/>
            <person name="Kasukawa T."/>
            <person name="Katayama S."/>
            <person name="Gough J."/>
            <person name="Frith M.C."/>
            <person name="Maeda N."/>
            <person name="Oyama R."/>
            <person name="Ravasi T."/>
            <person name="Lenhard B."/>
            <person name="Wells C."/>
            <person name="Kodzius R."/>
            <person name="Shimokawa K."/>
            <person name="Bajic V.B."/>
            <person name="Brenner S.E."/>
            <person name="Batalov S."/>
            <person name="Forrest A.R."/>
            <person name="Zavolan M."/>
            <person name="Davis M.J."/>
            <person name="Wilming L.G."/>
            <person name="Aidinis V."/>
            <person name="Allen J.E."/>
            <person name="Ambesi-Impiombato A."/>
            <person name="Apweiler R."/>
            <person name="Aturaliya R.N."/>
            <person name="Bailey T.L."/>
            <person name="Bansal M."/>
            <person name="Baxter L."/>
            <person name="Beisel K.W."/>
            <person name="Bersano T."/>
            <person name="Bono H."/>
            <person name="Chalk A.M."/>
            <person name="Chiu K.P."/>
            <person name="Choudhary V."/>
            <person name="Christoffels A."/>
            <person name="Clutterbuck D.R."/>
            <person name="Crowe M.L."/>
            <person name="Dalla E."/>
            <person name="Dalrymple B.P."/>
            <person name="de Bono B."/>
            <person name="Della Gatta G."/>
            <person name="di Bernardo D."/>
            <person name="Down T."/>
            <person name="Engstrom P."/>
            <person name="Fagiolini M."/>
            <person name="Faulkner G."/>
            <person name="Fletcher C.F."/>
            <person name="Fukushima T."/>
            <person name="Furuno M."/>
            <person name="Futaki S."/>
            <person name="Gariboldi M."/>
            <person name="Georgii-Hemming P."/>
            <person name="Gingeras T.R."/>
            <person name="Gojobori T."/>
            <person name="Green R.E."/>
            <person name="Gustincich S."/>
            <person name="Harbers M."/>
            <person name="Hayashi Y."/>
            <person name="Hensch T.K."/>
            <person name="Hirokawa N."/>
            <person name="Hill D."/>
            <person name="Huminiecki L."/>
            <person name="Iacono M."/>
            <person name="Ikeo K."/>
            <person name="Iwama A."/>
            <person name="Ishikawa T."/>
            <person name="Jakt M."/>
            <person name="Kanapin A."/>
            <person name="Katoh M."/>
            <person name="Kawasawa Y."/>
            <person name="Kelso J."/>
            <person name="Kitamura H."/>
            <person name="Kitano H."/>
            <person name="Kollias G."/>
            <person name="Krishnan S.P."/>
            <person name="Kruger A."/>
            <person name="Kummerfeld S.K."/>
            <person name="Kurochkin I.V."/>
            <person name="Lareau L.F."/>
            <person name="Lazarevic D."/>
            <person name="Lipovich L."/>
            <person name="Liu J."/>
            <person name="Liuni S."/>
            <person name="McWilliam S."/>
            <person name="Madan Babu M."/>
            <person name="Madera M."/>
            <person name="Marchionni L."/>
            <person name="Matsuda H."/>
            <person name="Matsuzawa S."/>
            <person name="Miki H."/>
            <person name="Mignone F."/>
            <person name="Miyake S."/>
            <person name="Morris K."/>
            <person name="Mottagui-Tabar S."/>
            <person name="Mulder N."/>
            <person name="Nakano N."/>
            <person name="Nakauchi H."/>
            <person name="Ng P."/>
            <person name="Nilsson R."/>
            <person name="Nishiguchi S."/>
            <person name="Nishikawa S."/>
            <person name="Nori F."/>
            <person name="Ohara O."/>
            <person name="Okazaki Y."/>
            <person name="Orlando V."/>
            <person name="Pang K.C."/>
            <person name="Pavan W.J."/>
            <person name="Pavesi G."/>
            <person name="Pesole G."/>
            <person name="Petrovsky N."/>
            <person name="Piazza S."/>
            <person name="Reed J."/>
            <person name="Reid J.F."/>
            <person name="Ring B.Z."/>
            <person name="Ringwald M."/>
            <person name="Rost B."/>
            <person name="Ruan Y."/>
            <person name="Salzberg S.L."/>
            <person name="Sandelin A."/>
            <person name="Schneider C."/>
            <person name="Schoenbach C."/>
            <person name="Sekiguchi K."/>
            <person name="Semple C.A."/>
            <person name="Seno S."/>
            <person name="Sessa L."/>
            <person name="Sheng Y."/>
            <person name="Shibata Y."/>
            <person name="Shimada H."/>
            <person name="Shimada K."/>
            <person name="Silva D."/>
            <person name="Sinclair B."/>
            <person name="Sperling S."/>
            <person name="Stupka E."/>
            <person name="Sugiura K."/>
            <person name="Sultana R."/>
            <person name="Takenaka Y."/>
            <person name="Taki K."/>
            <person name="Tammoja K."/>
            <person name="Tan S.L."/>
            <person name="Tang S."/>
            <person name="Taylor M.S."/>
            <person name="Tegner J."/>
            <person name="Teichmann S.A."/>
            <person name="Ueda H.R."/>
            <person name="van Nimwegen E."/>
            <person name="Verardo R."/>
            <person name="Wei C.L."/>
            <person name="Yagi K."/>
            <person name="Yamanishi H."/>
            <person name="Zabarovsky E."/>
            <person name="Zhu S."/>
            <person name="Zimmer A."/>
            <person name="Hide W."/>
            <person name="Bult C."/>
            <person name="Grimmond S.M."/>
            <person name="Teasdale R.D."/>
            <person name="Liu E.T."/>
            <person name="Brusic V."/>
            <person name="Quackenbush J."/>
            <person name="Wahlestedt C."/>
            <person name="Mattick J.S."/>
            <person name="Hume D.A."/>
            <person name="Kai C."/>
            <person name="Sasaki D."/>
            <person name="Tomaru Y."/>
            <person name="Fukuda S."/>
            <person name="Kanamori-Katayama M."/>
            <person name="Suzuki M."/>
            <person name="Aoki J."/>
            <person name="Arakawa T."/>
            <person name="Iida J."/>
            <person name="Imamura K."/>
            <person name="Itoh M."/>
            <person name="Kato T."/>
            <person name="Kawaji H."/>
            <person name="Kawagashira N."/>
            <person name="Kawashima T."/>
            <person name="Kojima M."/>
            <person name="Kondo S."/>
            <person name="Konno H."/>
            <person name="Nakano K."/>
            <person name="Ninomiya N."/>
            <person name="Nishio T."/>
            <person name="Okada M."/>
            <person name="Plessy C."/>
            <person name="Shibata K."/>
            <person name="Shiraki T."/>
            <person name="Suzuki S."/>
            <person name="Tagami M."/>
            <person name="Waki K."/>
            <person name="Watahiki A."/>
            <person name="Okamura-Oho Y."/>
            <person name="Suzuki H."/>
            <person name="Kawai J."/>
            <person name="Hayashizaki Y."/>
        </authorList>
    </citation>
    <scope>NUCLEOTIDE SEQUENCE [LARGE SCALE MRNA]</scope>
    <source>
        <strain>C57BL/6J</strain>
        <tissue>Brain cortex</tissue>
        <tissue>Hypothalamus</tissue>
        <tissue>Stomach</tissue>
        <tissue>Testis</tissue>
    </source>
</reference>
<reference key="2">
    <citation type="journal article" date="2004" name="Genome Res.">
        <title>The status, quality, and expansion of the NIH full-length cDNA project: the Mammalian Gene Collection (MGC).</title>
        <authorList>
            <consortium name="The MGC Project Team"/>
        </authorList>
    </citation>
    <scope>NUCLEOTIDE SEQUENCE [LARGE SCALE MRNA]</scope>
    <source>
        <tissue>Retina</tissue>
    </source>
</reference>
<reference key="3">
    <citation type="journal article" date="2010" name="Cell">
        <title>A tissue-specific atlas of mouse protein phosphorylation and expression.</title>
        <authorList>
            <person name="Huttlin E.L."/>
            <person name="Jedrychowski M.P."/>
            <person name="Elias J.E."/>
            <person name="Goswami T."/>
            <person name="Rad R."/>
            <person name="Beausoleil S.A."/>
            <person name="Villen J."/>
            <person name="Haas W."/>
            <person name="Sowa M.E."/>
            <person name="Gygi S.P."/>
        </authorList>
    </citation>
    <scope>IDENTIFICATION BY MASS SPECTROMETRY [LARGE SCALE ANALYSIS]</scope>
    <source>
        <tissue>Brain</tissue>
        <tissue>Testis</tissue>
    </source>
</reference>
<reference key="4">
    <citation type="journal article" date="2017" name="Cell Rep.">
        <title>The RAB2B-GARIL5 Complex Promotes Cytosolic DNA-Induced Innate Immune Responses.</title>
        <authorList>
            <person name="Takahama M."/>
            <person name="Fukuda M."/>
            <person name="Ohbayashi N."/>
            <person name="Kozaki T."/>
            <person name="Misawa T."/>
            <person name="Okamoto T."/>
            <person name="Matsuura Y."/>
            <person name="Akira S."/>
            <person name="Saitoh T."/>
        </authorList>
    </citation>
    <scope>FUNCTION</scope>
    <scope>INTERACTION WITH GARIN5A</scope>
    <scope>SUBCELLULAR LOCATION</scope>
    <scope>MUTAGENESIS OF SER-20 AND GLN-65</scope>
    <scope>CATALYTIC ACTIVITY</scope>
</reference>
<reference key="5">
    <citation type="journal article" date="2017" name="Elife">
        <title>Genetic screen in Drosophila muscle identifies autophagy-mediated T-tubule remodeling and a Rab2 role in autophagy.</title>
        <authorList>
            <person name="Fujita N."/>
            <person name="Huang W."/>
            <person name="Lin T.H."/>
            <person name="Groulx J.F."/>
            <person name="Jean S."/>
            <person name="Nguyen J."/>
            <person name="Kuchitsu Y."/>
            <person name="Koyama-Honda I."/>
            <person name="Mizushima N."/>
            <person name="Fukuda M."/>
            <person name="Kiger A.A."/>
        </authorList>
    </citation>
    <scope>FUNCTION</scope>
    <scope>INTERACTION WITH VPS39 AND VPS41</scope>
    <scope>SUBCELLULAR LOCATION</scope>
</reference>
<reference key="6">
    <citation type="journal article" date="2021" name="Development">
        <title>FAM71F1 binds to RAB2A and RAB2B and is essential for acrosome formation and male fertility in mice.</title>
        <authorList>
            <person name="Morohoshi A."/>
            <person name="Miyata H."/>
            <person name="Oyama Y."/>
            <person name="Oura S."/>
            <person name="Noda T."/>
            <person name="Ikawa M."/>
        </authorList>
    </citation>
    <scope>SUBCELLULAR LOCATION</scope>
    <scope>INTERACTION WITH GARIN1B</scope>
    <scope>TISSUE SPECIFICITY</scope>
    <scope>MUTAGENESIS OF SER-20 AND GLN-65</scope>
</reference>